<reference key="1">
    <citation type="submission" date="2007-06" db="EMBL/GenBank/DDBJ databases">
        <title>Identification of Kunitz-type serine protease inhibitors from the venom glands of Australian elapid snakes.</title>
        <authorList>
            <person name="St Pierre L."/>
            <person name="Earl S."/>
        </authorList>
    </citation>
    <scope>NUCLEOTIDE SEQUENCE [MRNA]</scope>
</reference>
<name>VKT6_CRYNI</name>
<organism>
    <name type="scientific">Cryptophis nigrescens</name>
    <name type="common">Eastern small-eyed snake</name>
    <name type="synonym">Rhinoplocephalus nigrescens</name>
    <dbReference type="NCBI Taxonomy" id="292442"/>
    <lineage>
        <taxon>Eukaryota</taxon>
        <taxon>Metazoa</taxon>
        <taxon>Chordata</taxon>
        <taxon>Craniata</taxon>
        <taxon>Vertebrata</taxon>
        <taxon>Euteleostomi</taxon>
        <taxon>Lepidosauria</taxon>
        <taxon>Squamata</taxon>
        <taxon>Bifurcata</taxon>
        <taxon>Unidentata</taxon>
        <taxon>Episquamata</taxon>
        <taxon>Toxicofera</taxon>
        <taxon>Serpentes</taxon>
        <taxon>Colubroidea</taxon>
        <taxon>Elapidae</taxon>
        <taxon>Hydrophiinae</taxon>
        <taxon>Cryptophis</taxon>
    </lineage>
</organism>
<protein>
    <recommendedName>
        <fullName>Kunitz-type serine protease inhibitor nigrescinin-6</fullName>
    </recommendedName>
</protein>
<evidence type="ECO:0000250" key="1"/>
<evidence type="ECO:0000255" key="2"/>
<evidence type="ECO:0000255" key="3">
    <source>
        <dbReference type="PROSITE-ProRule" id="PRU00031"/>
    </source>
</evidence>
<evidence type="ECO:0000305" key="4"/>
<accession>B5KL37</accession>
<feature type="signal peptide" evidence="2">
    <location>
        <begin position="1"/>
        <end position="24"/>
    </location>
</feature>
<feature type="chain" id="PRO_5000395596" description="Kunitz-type serine protease inhibitor nigrescinin-6">
    <location>
        <begin position="25"/>
        <end position="83"/>
    </location>
</feature>
<feature type="domain" description="BPTI/Kunitz inhibitor" evidence="3">
    <location>
        <begin position="31"/>
        <end position="81"/>
    </location>
</feature>
<feature type="site" description="Reactive bond for trypsin" evidence="1">
    <location>
        <begin position="41"/>
        <end position="42"/>
    </location>
</feature>
<feature type="disulfide bond" evidence="3">
    <location>
        <begin position="31"/>
        <end position="81"/>
    </location>
</feature>
<feature type="disulfide bond" evidence="3">
    <location>
        <begin position="40"/>
        <end position="64"/>
    </location>
</feature>
<feature type="disulfide bond" evidence="3">
    <location>
        <begin position="56"/>
        <end position="77"/>
    </location>
</feature>
<dbReference type="EMBL" id="EF990745">
    <property type="protein sequence ID" value="ABV64399.1"/>
    <property type="molecule type" value="mRNA"/>
</dbReference>
<dbReference type="SMR" id="B5KL37"/>
<dbReference type="MEROPS" id="I02.052"/>
<dbReference type="GO" id="GO:0005615">
    <property type="term" value="C:extracellular space"/>
    <property type="evidence" value="ECO:0007669"/>
    <property type="project" value="TreeGrafter"/>
</dbReference>
<dbReference type="GO" id="GO:0004867">
    <property type="term" value="F:serine-type endopeptidase inhibitor activity"/>
    <property type="evidence" value="ECO:0007669"/>
    <property type="project" value="UniProtKB-KW"/>
</dbReference>
<dbReference type="CDD" id="cd22594">
    <property type="entry name" value="Kunitz_textilinin-like"/>
    <property type="match status" value="1"/>
</dbReference>
<dbReference type="FunFam" id="4.10.410.10:FF:000021">
    <property type="entry name" value="Serine protease inhibitor, putative"/>
    <property type="match status" value="1"/>
</dbReference>
<dbReference type="Gene3D" id="4.10.410.10">
    <property type="entry name" value="Pancreatic trypsin inhibitor Kunitz domain"/>
    <property type="match status" value="1"/>
</dbReference>
<dbReference type="InterPro" id="IPR002223">
    <property type="entry name" value="Kunitz_BPTI"/>
</dbReference>
<dbReference type="InterPro" id="IPR036880">
    <property type="entry name" value="Kunitz_BPTI_sf"/>
</dbReference>
<dbReference type="InterPro" id="IPR020901">
    <property type="entry name" value="Prtase_inh_Kunz-CS"/>
</dbReference>
<dbReference type="InterPro" id="IPR050098">
    <property type="entry name" value="TFPI/VKTCI-like"/>
</dbReference>
<dbReference type="PANTHER" id="PTHR10083">
    <property type="entry name" value="KUNITZ-TYPE PROTEASE INHIBITOR-RELATED"/>
    <property type="match status" value="1"/>
</dbReference>
<dbReference type="PANTHER" id="PTHR10083:SF376">
    <property type="entry name" value="SERINE PEPTIDASE INHIBITOR, KUNITZ TYPE, 3"/>
    <property type="match status" value="1"/>
</dbReference>
<dbReference type="Pfam" id="PF00014">
    <property type="entry name" value="Kunitz_BPTI"/>
    <property type="match status" value="1"/>
</dbReference>
<dbReference type="PRINTS" id="PR00759">
    <property type="entry name" value="BASICPTASE"/>
</dbReference>
<dbReference type="SMART" id="SM00131">
    <property type="entry name" value="KU"/>
    <property type="match status" value="1"/>
</dbReference>
<dbReference type="SUPFAM" id="SSF57362">
    <property type="entry name" value="BPTI-like"/>
    <property type="match status" value="1"/>
</dbReference>
<dbReference type="PROSITE" id="PS00280">
    <property type="entry name" value="BPTI_KUNITZ_1"/>
    <property type="match status" value="1"/>
</dbReference>
<dbReference type="PROSITE" id="PS50279">
    <property type="entry name" value="BPTI_KUNITZ_2"/>
    <property type="match status" value="1"/>
</dbReference>
<proteinExistence type="evidence at transcript level"/>
<comment type="function">
    <text evidence="1">Serine protease inhibitor.</text>
</comment>
<comment type="subcellular location">
    <subcellularLocation>
        <location evidence="1">Secreted</location>
    </subcellularLocation>
</comment>
<comment type="tissue specificity">
    <text>Expressed by the venom gland.</text>
</comment>
<comment type="similarity">
    <text evidence="4">Belongs to the venom Kunitz-type family.</text>
</comment>
<sequence length="83" mass="9093">MSSGGLLLLLGLLTLWEVLTPVSSTDRPDFCELPEDSGSCKGNFEAFYYNSDQHQCLEFIYGGCDGNANNFKTIEECKLTCAA</sequence>
<keyword id="KW-1015">Disulfide bond</keyword>
<keyword id="KW-0646">Protease inhibitor</keyword>
<keyword id="KW-0964">Secreted</keyword>
<keyword id="KW-0722">Serine protease inhibitor</keyword>
<keyword id="KW-0732">Signal</keyword>